<dbReference type="EC" id="2.7.8.26" evidence="1"/>
<dbReference type="EMBL" id="CP000962">
    <property type="protein sequence ID" value="ACA54704.1"/>
    <property type="molecule type" value="Genomic_DNA"/>
</dbReference>
<dbReference type="RefSeq" id="WP_012342776.1">
    <property type="nucleotide sequence ID" value="NC_010520.1"/>
</dbReference>
<dbReference type="KEGG" id="cbl:CLK_0222"/>
<dbReference type="HOGENOM" id="CLU_057426_1_2_9"/>
<dbReference type="UniPathway" id="UPA00148">
    <property type="reaction ID" value="UER00238"/>
</dbReference>
<dbReference type="GO" id="GO:0005886">
    <property type="term" value="C:plasma membrane"/>
    <property type="evidence" value="ECO:0007669"/>
    <property type="project" value="UniProtKB-SubCell"/>
</dbReference>
<dbReference type="GO" id="GO:0051073">
    <property type="term" value="F:adenosylcobinamide-GDP ribazoletransferase activity"/>
    <property type="evidence" value="ECO:0007669"/>
    <property type="project" value="UniProtKB-UniRule"/>
</dbReference>
<dbReference type="GO" id="GO:0008818">
    <property type="term" value="F:cobalamin 5'-phosphate synthase activity"/>
    <property type="evidence" value="ECO:0007669"/>
    <property type="project" value="UniProtKB-UniRule"/>
</dbReference>
<dbReference type="GO" id="GO:0009236">
    <property type="term" value="P:cobalamin biosynthetic process"/>
    <property type="evidence" value="ECO:0007669"/>
    <property type="project" value="UniProtKB-UniRule"/>
</dbReference>
<dbReference type="HAMAP" id="MF_00719">
    <property type="entry name" value="CobS"/>
    <property type="match status" value="1"/>
</dbReference>
<dbReference type="InterPro" id="IPR003805">
    <property type="entry name" value="CobS"/>
</dbReference>
<dbReference type="NCBIfam" id="TIGR00317">
    <property type="entry name" value="cobS"/>
    <property type="match status" value="1"/>
</dbReference>
<dbReference type="PANTHER" id="PTHR34148">
    <property type="entry name" value="ADENOSYLCOBINAMIDE-GDP RIBAZOLETRANSFERASE"/>
    <property type="match status" value="1"/>
</dbReference>
<dbReference type="PANTHER" id="PTHR34148:SF1">
    <property type="entry name" value="ADENOSYLCOBINAMIDE-GDP RIBAZOLETRANSFERASE"/>
    <property type="match status" value="1"/>
</dbReference>
<dbReference type="Pfam" id="PF02654">
    <property type="entry name" value="CobS"/>
    <property type="match status" value="1"/>
</dbReference>
<protein>
    <recommendedName>
        <fullName evidence="1">Adenosylcobinamide-GDP ribazoletransferase</fullName>
        <ecNumber evidence="1">2.7.8.26</ecNumber>
    </recommendedName>
    <alternativeName>
        <fullName evidence="1">Cobalamin synthase</fullName>
    </alternativeName>
    <alternativeName>
        <fullName evidence="1">Cobalamin-5'-phosphate synthase</fullName>
    </alternativeName>
</protein>
<reference key="1">
    <citation type="journal article" date="2007" name="PLoS ONE">
        <title>Analysis of the neurotoxin complex genes in Clostridium botulinum A1-A4 and B1 strains: BoNT/A3, /Ba4 and /B1 clusters are located within plasmids.</title>
        <authorList>
            <person name="Smith T.J."/>
            <person name="Hill K.K."/>
            <person name="Foley B.T."/>
            <person name="Detter J.C."/>
            <person name="Munk A.C."/>
            <person name="Bruce D.C."/>
            <person name="Doggett N.A."/>
            <person name="Smith L.A."/>
            <person name="Marks J.D."/>
            <person name="Xie G."/>
            <person name="Brettin T.S."/>
        </authorList>
    </citation>
    <scope>NUCLEOTIDE SEQUENCE [LARGE SCALE GENOMIC DNA]</scope>
    <source>
        <strain>Loch Maree / Type A3</strain>
    </source>
</reference>
<evidence type="ECO:0000255" key="1">
    <source>
        <dbReference type="HAMAP-Rule" id="MF_00719"/>
    </source>
</evidence>
<comment type="function">
    <text evidence="1">Joins adenosylcobinamide-GDP and alpha-ribazole to generate adenosylcobalamin (Ado-cobalamin). Also synthesizes adenosylcobalamin 5'-phosphate from adenosylcobinamide-GDP and alpha-ribazole 5'-phosphate.</text>
</comment>
<comment type="catalytic activity">
    <reaction evidence="1">
        <text>alpha-ribazole + adenosylcob(III)inamide-GDP = adenosylcob(III)alamin + GMP + H(+)</text>
        <dbReference type="Rhea" id="RHEA:16049"/>
        <dbReference type="ChEBI" id="CHEBI:10329"/>
        <dbReference type="ChEBI" id="CHEBI:15378"/>
        <dbReference type="ChEBI" id="CHEBI:18408"/>
        <dbReference type="ChEBI" id="CHEBI:58115"/>
        <dbReference type="ChEBI" id="CHEBI:60487"/>
        <dbReference type="EC" id="2.7.8.26"/>
    </reaction>
</comment>
<comment type="catalytic activity">
    <reaction evidence="1">
        <text>alpha-ribazole 5'-phosphate + adenosylcob(III)inamide-GDP = adenosylcob(III)alamin 5'-phosphate + GMP + H(+)</text>
        <dbReference type="Rhea" id="RHEA:23560"/>
        <dbReference type="ChEBI" id="CHEBI:15378"/>
        <dbReference type="ChEBI" id="CHEBI:57918"/>
        <dbReference type="ChEBI" id="CHEBI:58115"/>
        <dbReference type="ChEBI" id="CHEBI:60487"/>
        <dbReference type="ChEBI" id="CHEBI:60493"/>
        <dbReference type="EC" id="2.7.8.26"/>
    </reaction>
</comment>
<comment type="cofactor">
    <cofactor evidence="1">
        <name>Mg(2+)</name>
        <dbReference type="ChEBI" id="CHEBI:18420"/>
    </cofactor>
</comment>
<comment type="pathway">
    <text evidence="1">Cofactor biosynthesis; adenosylcobalamin biosynthesis; adenosylcobalamin from cob(II)yrinate a,c-diamide: step 7/7.</text>
</comment>
<comment type="subcellular location">
    <subcellularLocation>
        <location evidence="1">Cell membrane</location>
        <topology evidence="1">Multi-pass membrane protein</topology>
    </subcellularLocation>
</comment>
<comment type="similarity">
    <text evidence="1">Belongs to the CobS family.</text>
</comment>
<accession>B1KX15</accession>
<name>COBS_CLOBM</name>
<proteinExistence type="inferred from homology"/>
<feature type="chain" id="PRO_1000132568" description="Adenosylcobinamide-GDP ribazoletransferase">
    <location>
        <begin position="1"/>
        <end position="248"/>
    </location>
</feature>
<feature type="transmembrane region" description="Helical" evidence="1">
    <location>
        <begin position="36"/>
        <end position="56"/>
    </location>
</feature>
<feature type="transmembrane region" description="Helical" evidence="1">
    <location>
        <begin position="59"/>
        <end position="79"/>
    </location>
</feature>
<feature type="transmembrane region" description="Helical" evidence="1">
    <location>
        <begin position="114"/>
        <end position="134"/>
    </location>
</feature>
<feature type="transmembrane region" description="Helical" evidence="1">
    <location>
        <begin position="137"/>
        <end position="157"/>
    </location>
</feature>
<feature type="transmembrane region" description="Helical" evidence="1">
    <location>
        <begin position="170"/>
        <end position="190"/>
    </location>
</feature>
<feature type="transmembrane region" description="Helical" evidence="1">
    <location>
        <begin position="199"/>
        <end position="219"/>
    </location>
</feature>
<organism>
    <name type="scientific">Clostridium botulinum (strain Loch Maree / Type A3)</name>
    <dbReference type="NCBI Taxonomy" id="498214"/>
    <lineage>
        <taxon>Bacteria</taxon>
        <taxon>Bacillati</taxon>
        <taxon>Bacillota</taxon>
        <taxon>Clostridia</taxon>
        <taxon>Eubacteriales</taxon>
        <taxon>Clostridiaceae</taxon>
        <taxon>Clostridium</taxon>
    </lineage>
</organism>
<keyword id="KW-1003">Cell membrane</keyword>
<keyword id="KW-0169">Cobalamin biosynthesis</keyword>
<keyword id="KW-0460">Magnesium</keyword>
<keyword id="KW-0472">Membrane</keyword>
<keyword id="KW-0808">Transferase</keyword>
<keyword id="KW-0812">Transmembrane</keyword>
<keyword id="KW-1133">Transmembrane helix</keyword>
<gene>
    <name evidence="1" type="primary">cobS</name>
    <name type="ordered locus">CLK_0222</name>
</gene>
<sequence length="248" mass="27601">MKSILNDFLLMIQFFTRIPINKNLQCEKANFRRGAFFLPVVASIIGGMEFLIYLGLKNFLPSNVIIVLLLLFTAMITGGLHMDGLADTCDGFFSLRDKERIIEIMKDSRIGSYGTIALIIDLLLKYQLLYSLVLKGYSIAIFLAPIIGRISILFLCLSKRTAKKNGSGNIFIGNMSKPIVFFISTIVLVLSTYFLGLRATIIPFIGALLITYLLYLLCLNKINGLTGDTLGACNELGEITFLLILLMM</sequence>